<evidence type="ECO:0000250" key="1">
    <source>
        <dbReference type="UniProtKB" id="P08839"/>
    </source>
</evidence>
<evidence type="ECO:0000250" key="2">
    <source>
        <dbReference type="UniProtKB" id="P23533"/>
    </source>
</evidence>
<evidence type="ECO:0000305" key="3"/>
<gene>
    <name type="primary">ptsI</name>
    <name type="ordered locus">SAR1057</name>
</gene>
<organism>
    <name type="scientific">Staphylococcus aureus (strain MRSA252)</name>
    <dbReference type="NCBI Taxonomy" id="282458"/>
    <lineage>
        <taxon>Bacteria</taxon>
        <taxon>Bacillati</taxon>
        <taxon>Bacillota</taxon>
        <taxon>Bacilli</taxon>
        <taxon>Bacillales</taxon>
        <taxon>Staphylococcaceae</taxon>
        <taxon>Staphylococcus</taxon>
    </lineage>
</organism>
<feature type="chain" id="PRO_0000147083" description="Phosphoenolpyruvate-protein phosphotransferase">
    <location>
        <begin position="1"/>
        <end position="572"/>
    </location>
</feature>
<feature type="active site" description="Tele-phosphohistidine intermediate" evidence="1">
    <location>
        <position position="191"/>
    </location>
</feature>
<feature type="active site" description="Proton donor" evidence="1">
    <location>
        <position position="504"/>
    </location>
</feature>
<feature type="binding site" evidence="2">
    <location>
        <position position="298"/>
    </location>
    <ligand>
        <name>phosphoenolpyruvate</name>
        <dbReference type="ChEBI" id="CHEBI:58702"/>
    </ligand>
</feature>
<feature type="binding site" evidence="1">
    <location>
        <position position="334"/>
    </location>
    <ligand>
        <name>phosphoenolpyruvate</name>
        <dbReference type="ChEBI" id="CHEBI:58702"/>
    </ligand>
</feature>
<feature type="binding site" evidence="1">
    <location>
        <position position="433"/>
    </location>
    <ligand>
        <name>Mg(2+)</name>
        <dbReference type="ChEBI" id="CHEBI:18420"/>
    </ligand>
</feature>
<feature type="binding site" evidence="1">
    <location>
        <begin position="456"/>
        <end position="457"/>
    </location>
    <ligand>
        <name>phosphoenolpyruvate</name>
        <dbReference type="ChEBI" id="CHEBI:58702"/>
    </ligand>
</feature>
<feature type="binding site" evidence="1">
    <location>
        <position position="457"/>
    </location>
    <ligand>
        <name>Mg(2+)</name>
        <dbReference type="ChEBI" id="CHEBI:18420"/>
    </ligand>
</feature>
<feature type="binding site" evidence="2">
    <location>
        <position position="467"/>
    </location>
    <ligand>
        <name>phosphoenolpyruvate</name>
        <dbReference type="ChEBI" id="CHEBI:58702"/>
    </ligand>
</feature>
<proteinExistence type="inferred from homology"/>
<protein>
    <recommendedName>
        <fullName evidence="1">Phosphoenolpyruvate-protein phosphotransferase</fullName>
        <ecNumber evidence="1">2.7.3.9</ecNumber>
    </recommendedName>
    <alternativeName>
        <fullName evidence="1">Phosphotransferase system, enzyme I</fullName>
    </alternativeName>
</protein>
<name>PT1_STAAR</name>
<sequence length="572" mass="63262">MSKLIKGIAASDGVAIAKAYLLVEPDLTFDKNEKVTDVEGEVAKFNNAIEASKVELTKIRNNAEVQLGADKAAIFDAHLLVLDDPELIQPIQDKIKNENANAASALTDVTTQFVTIFESMDNEYMKERAADIRDVSKRVLSHILGVELPNPSMIDESVVIVGNDLTPSDTAQLNKEFVQGFATNIGGRTSHSAIMSRSLEIPAIVGTKSITQEAKQGDMIIVDGLNGDVIVNPTEDELIAYQDKRERYFADKKELQKLRDADTVTVDGVHAELAANIGTPNDLPGVIENGAQGIGLYRTEFLYMGRDQMPTEEEQFEAYKEVLEAMDGKRVVVRTLDIGGDKELSYLNLPEEMNPFLGYRAIRLCLAQQDIFRPQLRALLRASVYGKLNIMFPMVATINEFREAKAILLEEKENLKNEGHDISDDIELGIMVEIPATAALADVFAKEVDFFSIGTNDLIQYTLAADRMSERVSYLYQPYNPSILRLVKQVIEASHKEGKWTGMCGEMAGDETAIPLLLGLGLDEFSMSATSILKARRQINGLSKNEMTELANRAVDCATQEEVIELVNNYVK</sequence>
<comment type="function">
    <text evidence="1">General (non sugar-specific) component of the phosphoenolpyruvate-dependent sugar phosphotransferase system (sugar PTS). This major carbohydrate active-transport system catalyzes the phosphorylation of incoming sugar substrates concomitantly with their translocation across the cell membrane. Enzyme I transfers the phosphoryl group from phosphoenolpyruvate (PEP) to the phosphoryl carrier protein (HPr).</text>
</comment>
<comment type="catalytic activity">
    <reaction evidence="1">
        <text>L-histidyl-[protein] + phosphoenolpyruvate = N(pros)-phospho-L-histidyl-[protein] + pyruvate</text>
        <dbReference type="Rhea" id="RHEA:23880"/>
        <dbReference type="Rhea" id="RHEA-COMP:9745"/>
        <dbReference type="Rhea" id="RHEA-COMP:9746"/>
        <dbReference type="ChEBI" id="CHEBI:15361"/>
        <dbReference type="ChEBI" id="CHEBI:29979"/>
        <dbReference type="ChEBI" id="CHEBI:58702"/>
        <dbReference type="ChEBI" id="CHEBI:64837"/>
        <dbReference type="EC" id="2.7.3.9"/>
    </reaction>
</comment>
<comment type="cofactor">
    <cofactor evidence="1">
        <name>Mg(2+)</name>
        <dbReference type="ChEBI" id="CHEBI:18420"/>
    </cofactor>
</comment>
<comment type="subunit">
    <text evidence="1">Homodimer.</text>
</comment>
<comment type="subcellular location">
    <subcellularLocation>
        <location evidence="3">Cytoplasm</location>
    </subcellularLocation>
</comment>
<comment type="domain">
    <text evidence="1">The N-terminal domain contains the HPr binding site, the central domain the pyrophosphate/phosphate carrier histidine, and the C-terminal domain the pyruvate binding site.</text>
</comment>
<comment type="miscellaneous">
    <text evidence="1">The reaction takes place in three steps, mediated by a phosphocarrier histidine residue located on the surface of the central domain. The two first partial reactions are catalyzed at an active site located on the N-terminal domain, and the third partial reaction is catalyzed at an active site located on the C-terminal domain. For catalytic turnover, the central domain swivels from the concave surface of the N-terminal domain to that of the C-terminal domain.</text>
</comment>
<comment type="similarity">
    <text evidence="3">Belongs to the PEP-utilizing enzyme family.</text>
</comment>
<dbReference type="EC" id="2.7.3.9" evidence="1"/>
<dbReference type="EMBL" id="BX571856">
    <property type="protein sequence ID" value="CAG40060.1"/>
    <property type="molecule type" value="Genomic_DNA"/>
</dbReference>
<dbReference type="SMR" id="Q6GI01"/>
<dbReference type="KEGG" id="sar:SAR1057"/>
<dbReference type="HOGENOM" id="CLU_007308_7_0_9"/>
<dbReference type="Proteomes" id="UP000000596">
    <property type="component" value="Chromosome"/>
</dbReference>
<dbReference type="GO" id="GO:0005737">
    <property type="term" value="C:cytoplasm"/>
    <property type="evidence" value="ECO:0007669"/>
    <property type="project" value="UniProtKB-SubCell"/>
</dbReference>
<dbReference type="GO" id="GO:0016301">
    <property type="term" value="F:kinase activity"/>
    <property type="evidence" value="ECO:0007669"/>
    <property type="project" value="UniProtKB-KW"/>
</dbReference>
<dbReference type="GO" id="GO:0046872">
    <property type="term" value="F:metal ion binding"/>
    <property type="evidence" value="ECO:0007669"/>
    <property type="project" value="UniProtKB-KW"/>
</dbReference>
<dbReference type="GO" id="GO:0008965">
    <property type="term" value="F:phosphoenolpyruvate-protein phosphotransferase activity"/>
    <property type="evidence" value="ECO:0007669"/>
    <property type="project" value="UniProtKB-EC"/>
</dbReference>
<dbReference type="GO" id="GO:0009401">
    <property type="term" value="P:phosphoenolpyruvate-dependent sugar phosphotransferase system"/>
    <property type="evidence" value="ECO:0007669"/>
    <property type="project" value="UniProtKB-KW"/>
</dbReference>
<dbReference type="FunFam" id="1.10.274.10:FF:000001">
    <property type="entry name" value="Phosphoenolpyruvate-protein phosphotransferase"/>
    <property type="match status" value="1"/>
</dbReference>
<dbReference type="FunFam" id="3.20.20.60:FF:000007">
    <property type="entry name" value="Phosphoenolpyruvate-protein phosphotransferase"/>
    <property type="match status" value="1"/>
</dbReference>
<dbReference type="Gene3D" id="3.20.20.60">
    <property type="entry name" value="Phosphoenolpyruvate-binding domains"/>
    <property type="match status" value="1"/>
</dbReference>
<dbReference type="Gene3D" id="3.50.30.10">
    <property type="entry name" value="Phosphohistidine domain"/>
    <property type="match status" value="1"/>
</dbReference>
<dbReference type="Gene3D" id="1.10.274.10">
    <property type="entry name" value="PtsI, HPr-binding domain"/>
    <property type="match status" value="1"/>
</dbReference>
<dbReference type="InterPro" id="IPR008279">
    <property type="entry name" value="PEP-util_enz_mobile_dom"/>
</dbReference>
<dbReference type="InterPro" id="IPR050499">
    <property type="entry name" value="PEP-utilizing_PTS_enzyme"/>
</dbReference>
<dbReference type="InterPro" id="IPR018274">
    <property type="entry name" value="PEP_util_AS"/>
</dbReference>
<dbReference type="InterPro" id="IPR000121">
    <property type="entry name" value="PEP_util_C"/>
</dbReference>
<dbReference type="InterPro" id="IPR023151">
    <property type="entry name" value="PEP_util_CS"/>
</dbReference>
<dbReference type="InterPro" id="IPR036637">
    <property type="entry name" value="Phosphohistidine_dom_sf"/>
</dbReference>
<dbReference type="InterPro" id="IPR024692">
    <property type="entry name" value="PTS_EI"/>
</dbReference>
<dbReference type="InterPro" id="IPR006318">
    <property type="entry name" value="PTS_EI-like"/>
</dbReference>
<dbReference type="InterPro" id="IPR008731">
    <property type="entry name" value="PTS_EIN"/>
</dbReference>
<dbReference type="InterPro" id="IPR036618">
    <property type="entry name" value="PtsI_HPr-bd_sf"/>
</dbReference>
<dbReference type="InterPro" id="IPR015813">
    <property type="entry name" value="Pyrv/PenolPyrv_kinase-like_dom"/>
</dbReference>
<dbReference type="InterPro" id="IPR040442">
    <property type="entry name" value="Pyrv_kinase-like_dom_sf"/>
</dbReference>
<dbReference type="NCBIfam" id="TIGR01417">
    <property type="entry name" value="PTS_I_fam"/>
    <property type="match status" value="1"/>
</dbReference>
<dbReference type="PANTHER" id="PTHR46244">
    <property type="entry name" value="PHOSPHOENOLPYRUVATE-PROTEIN PHOSPHOTRANSFERASE"/>
    <property type="match status" value="1"/>
</dbReference>
<dbReference type="PANTHER" id="PTHR46244:SF3">
    <property type="entry name" value="PHOSPHOENOLPYRUVATE-PROTEIN PHOSPHOTRANSFERASE"/>
    <property type="match status" value="1"/>
</dbReference>
<dbReference type="Pfam" id="PF05524">
    <property type="entry name" value="PEP-utilisers_N"/>
    <property type="match status" value="1"/>
</dbReference>
<dbReference type="Pfam" id="PF00391">
    <property type="entry name" value="PEP-utilizers"/>
    <property type="match status" value="1"/>
</dbReference>
<dbReference type="Pfam" id="PF02896">
    <property type="entry name" value="PEP-utilizers_C"/>
    <property type="match status" value="1"/>
</dbReference>
<dbReference type="PIRSF" id="PIRSF000732">
    <property type="entry name" value="PTS_enzyme_I"/>
    <property type="match status" value="1"/>
</dbReference>
<dbReference type="PRINTS" id="PR01736">
    <property type="entry name" value="PHPHTRNFRASE"/>
</dbReference>
<dbReference type="SUPFAM" id="SSF47831">
    <property type="entry name" value="Enzyme I of the PEP:sugar phosphotransferase system HPr-binding (sub)domain"/>
    <property type="match status" value="1"/>
</dbReference>
<dbReference type="SUPFAM" id="SSF51621">
    <property type="entry name" value="Phosphoenolpyruvate/pyruvate domain"/>
    <property type="match status" value="1"/>
</dbReference>
<dbReference type="SUPFAM" id="SSF52009">
    <property type="entry name" value="Phosphohistidine domain"/>
    <property type="match status" value="1"/>
</dbReference>
<dbReference type="PROSITE" id="PS00742">
    <property type="entry name" value="PEP_ENZYMES_2"/>
    <property type="match status" value="1"/>
</dbReference>
<dbReference type="PROSITE" id="PS00370">
    <property type="entry name" value="PEP_ENZYMES_PHOS_SITE"/>
    <property type="match status" value="1"/>
</dbReference>
<accession>Q6GI01</accession>
<keyword id="KW-0963">Cytoplasm</keyword>
<keyword id="KW-0418">Kinase</keyword>
<keyword id="KW-0460">Magnesium</keyword>
<keyword id="KW-0479">Metal-binding</keyword>
<keyword id="KW-0598">Phosphotransferase system</keyword>
<keyword id="KW-0762">Sugar transport</keyword>
<keyword id="KW-0808">Transferase</keyword>
<keyword id="KW-0813">Transport</keyword>
<reference key="1">
    <citation type="journal article" date="2004" name="Proc. Natl. Acad. Sci. U.S.A.">
        <title>Complete genomes of two clinical Staphylococcus aureus strains: evidence for the rapid evolution of virulence and drug resistance.</title>
        <authorList>
            <person name="Holden M.T.G."/>
            <person name="Feil E.J."/>
            <person name="Lindsay J.A."/>
            <person name="Peacock S.J."/>
            <person name="Day N.P.J."/>
            <person name="Enright M.C."/>
            <person name="Foster T.J."/>
            <person name="Moore C.E."/>
            <person name="Hurst L."/>
            <person name="Atkin R."/>
            <person name="Barron A."/>
            <person name="Bason N."/>
            <person name="Bentley S.D."/>
            <person name="Chillingworth C."/>
            <person name="Chillingworth T."/>
            <person name="Churcher C."/>
            <person name="Clark L."/>
            <person name="Corton C."/>
            <person name="Cronin A."/>
            <person name="Doggett J."/>
            <person name="Dowd L."/>
            <person name="Feltwell T."/>
            <person name="Hance Z."/>
            <person name="Harris B."/>
            <person name="Hauser H."/>
            <person name="Holroyd S."/>
            <person name="Jagels K."/>
            <person name="James K.D."/>
            <person name="Lennard N."/>
            <person name="Line A."/>
            <person name="Mayes R."/>
            <person name="Moule S."/>
            <person name="Mungall K."/>
            <person name="Ormond D."/>
            <person name="Quail M.A."/>
            <person name="Rabbinowitsch E."/>
            <person name="Rutherford K.M."/>
            <person name="Sanders M."/>
            <person name="Sharp S."/>
            <person name="Simmonds M."/>
            <person name="Stevens K."/>
            <person name="Whitehead S."/>
            <person name="Barrell B.G."/>
            <person name="Spratt B.G."/>
            <person name="Parkhill J."/>
        </authorList>
    </citation>
    <scope>NUCLEOTIDE SEQUENCE [LARGE SCALE GENOMIC DNA]</scope>
    <source>
        <strain>MRSA252</strain>
    </source>
</reference>